<sequence length="294" mass="31073">MTLKIGTRGSLLATTQSGHVRDDLRPYEAELVIVTTHGDVNMAPVERIGVGVFTQALREELHTGGCDIAVHSFKDLPTELDPRFHLVVPKRADFRDCLIARDGLSLADLPAGALIGTGAPRRISQIKALRPDVECVPLRGNIDTRMGKVTSGELDAVVLAYAGLTRVGRGDEATQVFDPQDFLPAPAQGALAVECRADDAYAREAIDSICDEQAQVCAVTERVVLNRLEAGCTAPVAAHATLNDGTLTLTAAVIALDGSKVVRRELSAPVAENVALAEELTRALIADGAATILG</sequence>
<proteinExistence type="inferred from homology"/>
<evidence type="ECO:0000255" key="1">
    <source>
        <dbReference type="HAMAP-Rule" id="MF_00260"/>
    </source>
</evidence>
<accession>Q6NJK0</accession>
<name>HEM3_CORDI</name>
<reference key="1">
    <citation type="journal article" date="2003" name="Nucleic Acids Res.">
        <title>The complete genome sequence and analysis of Corynebacterium diphtheriae NCTC13129.</title>
        <authorList>
            <person name="Cerdeno-Tarraga A.-M."/>
            <person name="Efstratiou A."/>
            <person name="Dover L.G."/>
            <person name="Holden M.T.G."/>
            <person name="Pallen M.J."/>
            <person name="Bentley S.D."/>
            <person name="Besra G.S."/>
            <person name="Churcher C.M."/>
            <person name="James K.D."/>
            <person name="De Zoysa A."/>
            <person name="Chillingworth T."/>
            <person name="Cronin A."/>
            <person name="Dowd L."/>
            <person name="Feltwell T."/>
            <person name="Hamlin N."/>
            <person name="Holroyd S."/>
            <person name="Jagels K."/>
            <person name="Moule S."/>
            <person name="Quail M.A."/>
            <person name="Rabbinowitsch E."/>
            <person name="Rutherford K.M."/>
            <person name="Thomson N.R."/>
            <person name="Unwin L."/>
            <person name="Whitehead S."/>
            <person name="Barrell B.G."/>
            <person name="Parkhill J."/>
        </authorList>
    </citation>
    <scope>NUCLEOTIDE SEQUENCE [LARGE SCALE GENOMIC DNA]</scope>
    <source>
        <strain>ATCC 700971 / NCTC 13129 / Biotype gravis</strain>
    </source>
</reference>
<keyword id="KW-0627">Porphyrin biosynthesis</keyword>
<keyword id="KW-1185">Reference proteome</keyword>
<keyword id="KW-0808">Transferase</keyword>
<feature type="chain" id="PRO_0000142928" description="Porphobilinogen deaminase">
    <location>
        <begin position="1"/>
        <end position="294"/>
    </location>
</feature>
<feature type="modified residue" description="S-(dipyrrolylmethanemethyl)cysteine" evidence="1">
    <location>
        <position position="232"/>
    </location>
</feature>
<gene>
    <name evidence="1" type="primary">hemC</name>
    <name type="ordered locus">DIP0401</name>
</gene>
<comment type="function">
    <text evidence="1">Tetrapolymerization of the monopyrrole PBG into the hydroxymethylbilane pre-uroporphyrinogen in several discrete steps.</text>
</comment>
<comment type="catalytic activity">
    <reaction evidence="1">
        <text>4 porphobilinogen + H2O = hydroxymethylbilane + 4 NH4(+)</text>
        <dbReference type="Rhea" id="RHEA:13185"/>
        <dbReference type="ChEBI" id="CHEBI:15377"/>
        <dbReference type="ChEBI" id="CHEBI:28938"/>
        <dbReference type="ChEBI" id="CHEBI:57845"/>
        <dbReference type="ChEBI" id="CHEBI:58126"/>
        <dbReference type="EC" id="2.5.1.61"/>
    </reaction>
</comment>
<comment type="cofactor">
    <cofactor evidence="1">
        <name>dipyrromethane</name>
        <dbReference type="ChEBI" id="CHEBI:60342"/>
    </cofactor>
    <text evidence="1">Binds 1 dipyrromethane group covalently.</text>
</comment>
<comment type="pathway">
    <text evidence="1">Porphyrin-containing compound metabolism; protoporphyrin-IX biosynthesis; coproporphyrinogen-III from 5-aminolevulinate: step 2/4.</text>
</comment>
<comment type="subunit">
    <text evidence="1">Monomer.</text>
</comment>
<comment type="miscellaneous">
    <text evidence="1">The porphobilinogen subunits are added to the dipyrromethane group.</text>
</comment>
<comment type="similarity">
    <text evidence="1">Belongs to the HMBS family.</text>
</comment>
<organism>
    <name type="scientific">Corynebacterium diphtheriae (strain ATCC 700971 / NCTC 13129 / Biotype gravis)</name>
    <dbReference type="NCBI Taxonomy" id="257309"/>
    <lineage>
        <taxon>Bacteria</taxon>
        <taxon>Bacillati</taxon>
        <taxon>Actinomycetota</taxon>
        <taxon>Actinomycetes</taxon>
        <taxon>Mycobacteriales</taxon>
        <taxon>Corynebacteriaceae</taxon>
        <taxon>Corynebacterium</taxon>
    </lineage>
</organism>
<dbReference type="EC" id="2.5.1.61" evidence="1"/>
<dbReference type="EMBL" id="BX248355">
    <property type="protein sequence ID" value="CAE48905.1"/>
    <property type="molecule type" value="Genomic_DNA"/>
</dbReference>
<dbReference type="RefSeq" id="WP_010934272.1">
    <property type="nucleotide sequence ID" value="NC_002935.2"/>
</dbReference>
<dbReference type="SMR" id="Q6NJK0"/>
<dbReference type="STRING" id="257309.DIP0401"/>
<dbReference type="GeneID" id="29421943"/>
<dbReference type="KEGG" id="cdi:DIP0401"/>
<dbReference type="HOGENOM" id="CLU_019704_1_0_11"/>
<dbReference type="UniPathway" id="UPA00251">
    <property type="reaction ID" value="UER00319"/>
</dbReference>
<dbReference type="Proteomes" id="UP000002198">
    <property type="component" value="Chromosome"/>
</dbReference>
<dbReference type="GO" id="GO:0005737">
    <property type="term" value="C:cytoplasm"/>
    <property type="evidence" value="ECO:0007669"/>
    <property type="project" value="TreeGrafter"/>
</dbReference>
<dbReference type="GO" id="GO:0004418">
    <property type="term" value="F:hydroxymethylbilane synthase activity"/>
    <property type="evidence" value="ECO:0007669"/>
    <property type="project" value="UniProtKB-UniRule"/>
</dbReference>
<dbReference type="GO" id="GO:0006782">
    <property type="term" value="P:protoporphyrinogen IX biosynthetic process"/>
    <property type="evidence" value="ECO:0007669"/>
    <property type="project" value="UniProtKB-UniRule"/>
</dbReference>
<dbReference type="FunFam" id="3.40.190.10:FF:000005">
    <property type="entry name" value="Porphobilinogen deaminase"/>
    <property type="match status" value="1"/>
</dbReference>
<dbReference type="Gene3D" id="3.40.190.10">
    <property type="entry name" value="Periplasmic binding protein-like II"/>
    <property type="match status" value="2"/>
</dbReference>
<dbReference type="Gene3D" id="3.30.160.40">
    <property type="entry name" value="Porphobilinogen deaminase, C-terminal domain"/>
    <property type="match status" value="1"/>
</dbReference>
<dbReference type="HAMAP" id="MF_00260">
    <property type="entry name" value="Porphobil_deam"/>
    <property type="match status" value="1"/>
</dbReference>
<dbReference type="InterPro" id="IPR000860">
    <property type="entry name" value="HemC"/>
</dbReference>
<dbReference type="InterPro" id="IPR022419">
    <property type="entry name" value="Porphobilin_deaminase_cofac_BS"/>
</dbReference>
<dbReference type="InterPro" id="IPR022417">
    <property type="entry name" value="Porphobilin_deaminase_N"/>
</dbReference>
<dbReference type="InterPro" id="IPR022418">
    <property type="entry name" value="Porphobilinogen_deaminase_C"/>
</dbReference>
<dbReference type="InterPro" id="IPR036803">
    <property type="entry name" value="Porphobilinogen_deaminase_C_sf"/>
</dbReference>
<dbReference type="NCBIfam" id="TIGR00212">
    <property type="entry name" value="hemC"/>
    <property type="match status" value="1"/>
</dbReference>
<dbReference type="PANTHER" id="PTHR11557">
    <property type="entry name" value="PORPHOBILINOGEN DEAMINASE"/>
    <property type="match status" value="1"/>
</dbReference>
<dbReference type="PANTHER" id="PTHR11557:SF0">
    <property type="entry name" value="PORPHOBILINOGEN DEAMINASE"/>
    <property type="match status" value="1"/>
</dbReference>
<dbReference type="Pfam" id="PF01379">
    <property type="entry name" value="Porphobil_deam"/>
    <property type="match status" value="1"/>
</dbReference>
<dbReference type="Pfam" id="PF03900">
    <property type="entry name" value="Porphobil_deamC"/>
    <property type="match status" value="1"/>
</dbReference>
<dbReference type="PIRSF" id="PIRSF001438">
    <property type="entry name" value="4pyrrol_synth_OHMeBilane_synth"/>
    <property type="match status" value="1"/>
</dbReference>
<dbReference type="PRINTS" id="PR00151">
    <property type="entry name" value="PORPHBDMNASE"/>
</dbReference>
<dbReference type="SUPFAM" id="SSF53850">
    <property type="entry name" value="Periplasmic binding protein-like II"/>
    <property type="match status" value="1"/>
</dbReference>
<dbReference type="SUPFAM" id="SSF54782">
    <property type="entry name" value="Porphobilinogen deaminase (hydroxymethylbilane synthase), C-terminal domain"/>
    <property type="match status" value="1"/>
</dbReference>
<dbReference type="PROSITE" id="PS00533">
    <property type="entry name" value="PORPHOBILINOGEN_DEAM"/>
    <property type="match status" value="1"/>
</dbReference>
<protein>
    <recommendedName>
        <fullName evidence="1">Porphobilinogen deaminase</fullName>
        <shortName evidence="1">PBG</shortName>
        <ecNumber evidence="1">2.5.1.61</ecNumber>
    </recommendedName>
    <alternativeName>
        <fullName evidence="1">Hydroxymethylbilane synthase</fullName>
        <shortName evidence="1">HMBS</shortName>
    </alternativeName>
    <alternativeName>
        <fullName evidence="1">Pre-uroporphyrinogen synthase</fullName>
    </alternativeName>
</protein>